<evidence type="ECO:0000255" key="1">
    <source>
        <dbReference type="HAMAP-Rule" id="MF_00660"/>
    </source>
</evidence>
<evidence type="ECO:0000255" key="2">
    <source>
        <dbReference type="PROSITE-ProRule" id="PRU01266"/>
    </source>
</evidence>
<evidence type="ECO:0000256" key="3">
    <source>
        <dbReference type="SAM" id="MobiDB-lite"/>
    </source>
</evidence>
<proteinExistence type="inferred from homology"/>
<protein>
    <recommendedName>
        <fullName evidence="1">PqqA peptide cyclase</fullName>
        <ecNumber evidence="1">1.21.98.4</ecNumber>
    </recommendedName>
    <alternativeName>
        <fullName evidence="1">Coenzyme PQQ synthesis protein E</fullName>
    </alternativeName>
    <alternativeName>
        <fullName evidence="1">Pyrroloquinoline quinone biosynthesis protein E</fullName>
    </alternativeName>
</protein>
<dbReference type="EC" id="1.21.98.4" evidence="1"/>
<dbReference type="EMBL" id="AM039952">
    <property type="protein sequence ID" value="CAJ24979.1"/>
    <property type="molecule type" value="Genomic_DNA"/>
</dbReference>
<dbReference type="RefSeq" id="WP_011348255.1">
    <property type="nucleotide sequence ID" value="NZ_CP017190.1"/>
</dbReference>
<dbReference type="SMR" id="Q3BQI4"/>
<dbReference type="STRING" id="456327.BJD11_06540"/>
<dbReference type="KEGG" id="xcv:XCV3248"/>
<dbReference type="eggNOG" id="COG0535">
    <property type="taxonomic scope" value="Bacteria"/>
</dbReference>
<dbReference type="HOGENOM" id="CLU_009273_4_7_6"/>
<dbReference type="UniPathway" id="UPA00539"/>
<dbReference type="Proteomes" id="UP000007069">
    <property type="component" value="Chromosome"/>
</dbReference>
<dbReference type="GO" id="GO:0051539">
    <property type="term" value="F:4 iron, 4 sulfur cluster binding"/>
    <property type="evidence" value="ECO:0007669"/>
    <property type="project" value="UniProtKB-KW"/>
</dbReference>
<dbReference type="GO" id="GO:0009975">
    <property type="term" value="F:cyclase activity"/>
    <property type="evidence" value="ECO:0007669"/>
    <property type="project" value="UniProtKB-UniRule"/>
</dbReference>
<dbReference type="GO" id="GO:0005506">
    <property type="term" value="F:iron ion binding"/>
    <property type="evidence" value="ECO:0007669"/>
    <property type="project" value="UniProtKB-UniRule"/>
</dbReference>
<dbReference type="GO" id="GO:0016491">
    <property type="term" value="F:oxidoreductase activity"/>
    <property type="evidence" value="ECO:0007669"/>
    <property type="project" value="UniProtKB-KW"/>
</dbReference>
<dbReference type="GO" id="GO:1904047">
    <property type="term" value="F:S-adenosyl-L-methionine binding"/>
    <property type="evidence" value="ECO:0007669"/>
    <property type="project" value="UniProtKB-UniRule"/>
</dbReference>
<dbReference type="GO" id="GO:0018189">
    <property type="term" value="P:pyrroloquinoline quinone biosynthetic process"/>
    <property type="evidence" value="ECO:0007669"/>
    <property type="project" value="UniProtKB-UniRule"/>
</dbReference>
<dbReference type="CDD" id="cd01335">
    <property type="entry name" value="Radical_SAM"/>
    <property type="match status" value="1"/>
</dbReference>
<dbReference type="CDD" id="cd21119">
    <property type="entry name" value="SPASM_PqqE"/>
    <property type="match status" value="1"/>
</dbReference>
<dbReference type="Gene3D" id="3.20.20.70">
    <property type="entry name" value="Aldolase class I"/>
    <property type="match status" value="1"/>
</dbReference>
<dbReference type="HAMAP" id="MF_00660">
    <property type="entry name" value="PqqE"/>
    <property type="match status" value="1"/>
</dbReference>
<dbReference type="InterPro" id="IPR023885">
    <property type="entry name" value="4Fe4S-binding_SPASM_dom"/>
</dbReference>
<dbReference type="InterPro" id="IPR013785">
    <property type="entry name" value="Aldolase_TIM"/>
</dbReference>
<dbReference type="InterPro" id="IPR011843">
    <property type="entry name" value="PQQ_synth_PqqE_bac"/>
</dbReference>
<dbReference type="InterPro" id="IPR017200">
    <property type="entry name" value="PqqE-like"/>
</dbReference>
<dbReference type="InterPro" id="IPR050377">
    <property type="entry name" value="Radical_SAM_PqqE_MftC-like"/>
</dbReference>
<dbReference type="InterPro" id="IPR007197">
    <property type="entry name" value="rSAM"/>
</dbReference>
<dbReference type="NCBIfam" id="TIGR02109">
    <property type="entry name" value="PQQ_syn_pqqE"/>
    <property type="match status" value="1"/>
</dbReference>
<dbReference type="NCBIfam" id="TIGR04085">
    <property type="entry name" value="rSAM_more_4Fe4S"/>
    <property type="match status" value="1"/>
</dbReference>
<dbReference type="PANTHER" id="PTHR11228:SF7">
    <property type="entry name" value="PQQA PEPTIDE CYCLASE"/>
    <property type="match status" value="1"/>
</dbReference>
<dbReference type="PANTHER" id="PTHR11228">
    <property type="entry name" value="RADICAL SAM DOMAIN PROTEIN"/>
    <property type="match status" value="1"/>
</dbReference>
<dbReference type="Pfam" id="PF04055">
    <property type="entry name" value="Radical_SAM"/>
    <property type="match status" value="1"/>
</dbReference>
<dbReference type="Pfam" id="PF13186">
    <property type="entry name" value="SPASM"/>
    <property type="match status" value="1"/>
</dbReference>
<dbReference type="PIRSF" id="PIRSF037420">
    <property type="entry name" value="PQQ_syn_pqqE"/>
    <property type="match status" value="1"/>
</dbReference>
<dbReference type="SFLD" id="SFLDF00280">
    <property type="entry name" value="coenzyme_PQQ_synthesis_protein"/>
    <property type="match status" value="1"/>
</dbReference>
<dbReference type="SFLD" id="SFLDS00029">
    <property type="entry name" value="Radical_SAM"/>
    <property type="match status" value="1"/>
</dbReference>
<dbReference type="SUPFAM" id="SSF102114">
    <property type="entry name" value="Radical SAM enzymes"/>
    <property type="match status" value="1"/>
</dbReference>
<dbReference type="PROSITE" id="PS51918">
    <property type="entry name" value="RADICAL_SAM"/>
    <property type="match status" value="1"/>
</dbReference>
<feature type="chain" id="PRO_1000061918" description="PqqA peptide cyclase">
    <location>
        <begin position="1"/>
        <end position="372"/>
    </location>
</feature>
<feature type="domain" description="Radical SAM core" evidence="2">
    <location>
        <begin position="4"/>
        <end position="220"/>
    </location>
</feature>
<feature type="region of interest" description="Disordered" evidence="3">
    <location>
        <begin position="342"/>
        <end position="372"/>
    </location>
</feature>
<feature type="binding site" evidence="1">
    <location>
        <position position="18"/>
    </location>
    <ligand>
        <name>[4Fe-4S] cluster</name>
        <dbReference type="ChEBI" id="CHEBI:49883"/>
        <note>4Fe-4S-S-AdoMet</note>
    </ligand>
</feature>
<feature type="binding site" evidence="1">
    <location>
        <position position="22"/>
    </location>
    <ligand>
        <name>[4Fe-4S] cluster</name>
        <dbReference type="ChEBI" id="CHEBI:49883"/>
        <note>4Fe-4S-S-AdoMet</note>
    </ligand>
</feature>
<feature type="binding site" evidence="1">
    <location>
        <position position="25"/>
    </location>
    <ligand>
        <name>[4Fe-4S] cluster</name>
        <dbReference type="ChEBI" id="CHEBI:49883"/>
        <note>4Fe-4S-S-AdoMet</note>
    </ligand>
</feature>
<keyword id="KW-0004">4Fe-4S</keyword>
<keyword id="KW-0408">Iron</keyword>
<keyword id="KW-0411">Iron-sulfur</keyword>
<keyword id="KW-0479">Metal-binding</keyword>
<keyword id="KW-0560">Oxidoreductase</keyword>
<keyword id="KW-0884">PQQ biosynthesis</keyword>
<keyword id="KW-0949">S-adenosyl-L-methionine</keyword>
<sequence length="372" mass="40635">MSIAPPPLSVLLELTHRCPLACPYCSNPIALAALREEMDTAGWRSLLQQAADMGVLQAHFSGGEPMLRKDLPELVAHARALGLYSNLITSGVAGGEPMLDQLQAAGLEHVQLSVQDVDAAGADRIAGYRNSLSKKREFAAAVRARGLPLTINAVLHRHNAERVPGMIALALEWQAERIEVAHTQYDGWGLRNRAALMPSREQLLATIDAVETARRQLGDRLAIDFVTPDYYARQPKPCMGGWGQRFVNISPRGDVLPCHAAETIDGLRFDNLRERSLADIWNNGEAFVRFRGTAWMPEVCQGCPKREIDWGGCRCQALALSGDAATLDPVCERSPIHAQVRATAEQESASPAPAFIYRRPERPAAATADPLE</sequence>
<reference key="1">
    <citation type="journal article" date="2005" name="J. Bacteriol.">
        <title>Insights into genome plasticity and pathogenicity of the plant pathogenic Bacterium Xanthomonas campestris pv. vesicatoria revealed by the complete genome sequence.</title>
        <authorList>
            <person name="Thieme F."/>
            <person name="Koebnik R."/>
            <person name="Bekel T."/>
            <person name="Berger C."/>
            <person name="Boch J."/>
            <person name="Buettner D."/>
            <person name="Caldana C."/>
            <person name="Gaigalat L."/>
            <person name="Goesmann A."/>
            <person name="Kay S."/>
            <person name="Kirchner O."/>
            <person name="Lanz C."/>
            <person name="Linke B."/>
            <person name="McHardy A.C."/>
            <person name="Meyer F."/>
            <person name="Mittenhuber G."/>
            <person name="Nies D.H."/>
            <person name="Niesbach-Kloesgen U."/>
            <person name="Patschkowski T."/>
            <person name="Rueckert C."/>
            <person name="Rupp O."/>
            <person name="Schneiker S."/>
            <person name="Schuster S.C."/>
            <person name="Vorhoelter F.J."/>
            <person name="Weber E."/>
            <person name="Puehler A."/>
            <person name="Bonas U."/>
            <person name="Bartels D."/>
            <person name="Kaiser O."/>
        </authorList>
    </citation>
    <scope>NUCLEOTIDE SEQUENCE [LARGE SCALE GENOMIC DNA]</scope>
    <source>
        <strain>85-10</strain>
    </source>
</reference>
<accession>Q3BQI4</accession>
<name>PQQE_XANE5</name>
<gene>
    <name evidence="1" type="primary">pqqE</name>
    <name type="ordered locus">XCV3248</name>
</gene>
<organism>
    <name type="scientific">Xanthomonas euvesicatoria pv. vesicatoria (strain 85-10)</name>
    <name type="common">Xanthomonas campestris pv. vesicatoria</name>
    <dbReference type="NCBI Taxonomy" id="316273"/>
    <lineage>
        <taxon>Bacteria</taxon>
        <taxon>Pseudomonadati</taxon>
        <taxon>Pseudomonadota</taxon>
        <taxon>Gammaproteobacteria</taxon>
        <taxon>Lysobacterales</taxon>
        <taxon>Lysobacteraceae</taxon>
        <taxon>Xanthomonas</taxon>
    </lineage>
</organism>
<comment type="function">
    <text evidence="1">Catalyzes the cross-linking of a glutamate residue and a tyrosine residue in the PqqA protein as part of the biosynthesis of pyrroloquinoline quinone (PQQ).</text>
</comment>
<comment type="catalytic activity">
    <reaction evidence="1">
        <text>[PQQ precursor protein] + S-adenosyl-L-methionine = E-Y cross-linked-[PQQ precursor protein] + 5'-deoxyadenosine + L-methionine + H(+)</text>
        <dbReference type="Rhea" id="RHEA:56836"/>
        <dbReference type="Rhea" id="RHEA-COMP:14800"/>
        <dbReference type="Rhea" id="RHEA-COMP:14801"/>
        <dbReference type="ChEBI" id="CHEBI:15378"/>
        <dbReference type="ChEBI" id="CHEBI:17319"/>
        <dbReference type="ChEBI" id="CHEBI:57844"/>
        <dbReference type="ChEBI" id="CHEBI:59789"/>
        <dbReference type="ChEBI" id="CHEBI:141026"/>
        <dbReference type="ChEBI" id="CHEBI:141027"/>
        <dbReference type="EC" id="1.21.98.4"/>
    </reaction>
</comment>
<comment type="cofactor">
    <cofactor evidence="1">
        <name>[4Fe-4S] cluster</name>
        <dbReference type="ChEBI" id="CHEBI:49883"/>
    </cofactor>
    <text evidence="1">Binds 1 [4Fe-4S] cluster. The cluster is coordinated with 3 cysteines and an exchangeable S-adenosyl-L-methionine.</text>
</comment>
<comment type="pathway">
    <text evidence="1">Cofactor biosynthesis; pyrroloquinoline quinone biosynthesis.</text>
</comment>
<comment type="subunit">
    <text evidence="1">Interacts with PqqD. The interaction is necessary for activity of PqqE.</text>
</comment>
<comment type="similarity">
    <text evidence="1">Belongs to the radical SAM superfamily. PqqE family.</text>
</comment>